<proteinExistence type="inferred from homology"/>
<name>MSCL_LARHH</name>
<keyword id="KW-0997">Cell inner membrane</keyword>
<keyword id="KW-1003">Cell membrane</keyword>
<keyword id="KW-0407">Ion channel</keyword>
<keyword id="KW-0406">Ion transport</keyword>
<keyword id="KW-0472">Membrane</keyword>
<keyword id="KW-1185">Reference proteome</keyword>
<keyword id="KW-0812">Transmembrane</keyword>
<keyword id="KW-1133">Transmembrane helix</keyword>
<keyword id="KW-0813">Transport</keyword>
<protein>
    <recommendedName>
        <fullName evidence="1">Large-conductance mechanosensitive channel</fullName>
    </recommendedName>
</protein>
<feature type="chain" id="PRO_1000191375" description="Large-conductance mechanosensitive channel">
    <location>
        <begin position="1"/>
        <end position="152"/>
    </location>
</feature>
<feature type="transmembrane region" description="Helical" evidence="1">
    <location>
        <begin position="14"/>
        <end position="34"/>
    </location>
</feature>
<feature type="transmembrane region" description="Helical" evidence="1">
    <location>
        <begin position="84"/>
        <end position="104"/>
    </location>
</feature>
<evidence type="ECO:0000255" key="1">
    <source>
        <dbReference type="HAMAP-Rule" id="MF_00115"/>
    </source>
</evidence>
<sequence>MFKEFREFAMRGNVIDLAVGVVIGAAFGSIVKSLVDDIIMPPIGLLIGKVNFADLFITLKAGATPGPYATVAAAKAAGAVTMNVGQFINSVVSFVLIAFSVFLLVKVVNRLYQKKDAAAPAPATRDCPFCATAIPLAATRCPHCTSQVPPAD</sequence>
<reference key="1">
    <citation type="journal article" date="2009" name="PLoS Genet.">
        <title>The complete genome and proteome of Laribacter hongkongensis reveal potential mechanisms for adaptations to different temperatures and habitats.</title>
        <authorList>
            <person name="Woo P.C.Y."/>
            <person name="Lau S.K.P."/>
            <person name="Tse H."/>
            <person name="Teng J.L.L."/>
            <person name="Curreem S.O."/>
            <person name="Tsang A.K.L."/>
            <person name="Fan R.Y.Y."/>
            <person name="Wong G.K.M."/>
            <person name="Huang Y."/>
            <person name="Loman N.J."/>
            <person name="Snyder L.A.S."/>
            <person name="Cai J.J."/>
            <person name="Huang J.-D."/>
            <person name="Mak W."/>
            <person name="Pallen M.J."/>
            <person name="Lok S."/>
            <person name="Yuen K.-Y."/>
        </authorList>
    </citation>
    <scope>NUCLEOTIDE SEQUENCE [LARGE SCALE GENOMIC DNA]</scope>
    <source>
        <strain>HLHK9</strain>
    </source>
</reference>
<organism>
    <name type="scientific">Laribacter hongkongensis (strain HLHK9)</name>
    <dbReference type="NCBI Taxonomy" id="557598"/>
    <lineage>
        <taxon>Bacteria</taxon>
        <taxon>Pseudomonadati</taxon>
        <taxon>Pseudomonadota</taxon>
        <taxon>Betaproteobacteria</taxon>
        <taxon>Neisseriales</taxon>
        <taxon>Aquaspirillaceae</taxon>
        <taxon>Laribacter</taxon>
    </lineage>
</organism>
<comment type="function">
    <text evidence="1">Channel that opens in response to stretch forces in the membrane lipid bilayer. May participate in the regulation of osmotic pressure changes within the cell.</text>
</comment>
<comment type="subunit">
    <text evidence="1">Homopentamer.</text>
</comment>
<comment type="subcellular location">
    <subcellularLocation>
        <location evidence="1">Cell inner membrane</location>
        <topology evidence="1">Multi-pass membrane protein</topology>
    </subcellularLocation>
</comment>
<comment type="similarity">
    <text evidence="1">Belongs to the MscL family.</text>
</comment>
<dbReference type="EMBL" id="CP001154">
    <property type="protein sequence ID" value="ACO75543.1"/>
    <property type="molecule type" value="Genomic_DNA"/>
</dbReference>
<dbReference type="RefSeq" id="WP_012698029.1">
    <property type="nucleotide sequence ID" value="NC_012559.1"/>
</dbReference>
<dbReference type="STRING" id="557598.LHK_02562"/>
<dbReference type="GeneID" id="75110592"/>
<dbReference type="KEGG" id="lhk:LHK_02562"/>
<dbReference type="eggNOG" id="COG1970">
    <property type="taxonomic scope" value="Bacteria"/>
</dbReference>
<dbReference type="HOGENOM" id="CLU_095787_2_3_4"/>
<dbReference type="Proteomes" id="UP000002010">
    <property type="component" value="Chromosome"/>
</dbReference>
<dbReference type="GO" id="GO:0005886">
    <property type="term" value="C:plasma membrane"/>
    <property type="evidence" value="ECO:0007669"/>
    <property type="project" value="UniProtKB-SubCell"/>
</dbReference>
<dbReference type="GO" id="GO:0008381">
    <property type="term" value="F:mechanosensitive monoatomic ion channel activity"/>
    <property type="evidence" value="ECO:0007669"/>
    <property type="project" value="UniProtKB-UniRule"/>
</dbReference>
<dbReference type="Gene3D" id="1.10.1200.120">
    <property type="entry name" value="Large-conductance mechanosensitive channel, MscL, domain 1"/>
    <property type="match status" value="1"/>
</dbReference>
<dbReference type="HAMAP" id="MF_00115">
    <property type="entry name" value="MscL"/>
    <property type="match status" value="1"/>
</dbReference>
<dbReference type="InterPro" id="IPR019823">
    <property type="entry name" value="Mechanosensitive_channel_CS"/>
</dbReference>
<dbReference type="InterPro" id="IPR001185">
    <property type="entry name" value="MS_channel"/>
</dbReference>
<dbReference type="InterPro" id="IPR037673">
    <property type="entry name" value="MSC/AndL"/>
</dbReference>
<dbReference type="InterPro" id="IPR036019">
    <property type="entry name" value="MscL_channel"/>
</dbReference>
<dbReference type="NCBIfam" id="TIGR00220">
    <property type="entry name" value="mscL"/>
    <property type="match status" value="1"/>
</dbReference>
<dbReference type="NCBIfam" id="NF001843">
    <property type="entry name" value="PRK00567.1-4"/>
    <property type="match status" value="1"/>
</dbReference>
<dbReference type="PANTHER" id="PTHR30266:SF2">
    <property type="entry name" value="LARGE-CONDUCTANCE MECHANOSENSITIVE CHANNEL"/>
    <property type="match status" value="1"/>
</dbReference>
<dbReference type="PANTHER" id="PTHR30266">
    <property type="entry name" value="MECHANOSENSITIVE CHANNEL MSCL"/>
    <property type="match status" value="1"/>
</dbReference>
<dbReference type="Pfam" id="PF01741">
    <property type="entry name" value="MscL"/>
    <property type="match status" value="1"/>
</dbReference>
<dbReference type="PRINTS" id="PR01264">
    <property type="entry name" value="MECHCHANNEL"/>
</dbReference>
<dbReference type="SUPFAM" id="SSF81330">
    <property type="entry name" value="Gated mechanosensitive channel"/>
    <property type="match status" value="1"/>
</dbReference>
<dbReference type="PROSITE" id="PS01327">
    <property type="entry name" value="MSCL"/>
    <property type="match status" value="1"/>
</dbReference>
<accession>C1DBZ0</accession>
<gene>
    <name evidence="1" type="primary">mscL</name>
    <name type="ordered locus">LHK_02562</name>
</gene>